<protein>
    <recommendedName>
        <fullName evidence="1">Eukaryotic translation initiation factor 3 subunit E</fullName>
        <shortName evidence="1">eIF3e</shortName>
    </recommendedName>
    <alternativeName>
        <fullName evidence="1">Eukaryotic translation initiation factor 3 subunit 6</fullName>
    </alternativeName>
</protein>
<organism>
    <name type="scientific">Monosiga brevicollis</name>
    <name type="common">Choanoflagellate</name>
    <dbReference type="NCBI Taxonomy" id="81824"/>
    <lineage>
        <taxon>Eukaryota</taxon>
        <taxon>Choanoflagellata</taxon>
        <taxon>Craspedida</taxon>
        <taxon>Salpingoecidae</taxon>
        <taxon>Monosiga</taxon>
    </lineage>
</organism>
<evidence type="ECO:0000255" key="1">
    <source>
        <dbReference type="HAMAP-Rule" id="MF_03004"/>
    </source>
</evidence>
<evidence type="ECO:0000255" key="2">
    <source>
        <dbReference type="PROSITE-ProRule" id="PRU01185"/>
    </source>
</evidence>
<evidence type="ECO:0000256" key="3">
    <source>
        <dbReference type="SAM" id="MobiDB-lite"/>
    </source>
</evidence>
<comment type="function">
    <text evidence="1">Component of the eukaryotic translation initiation factor 3 (eIF-3) complex, which is involved in protein synthesis of a specialized repertoire of mRNAs and, together with other initiation factors, stimulates binding of mRNA and methionyl-tRNAi to the 40S ribosome. The eIF-3 complex specifically targets and initiates translation of a subset of mRNAs involved in cell proliferation.</text>
</comment>
<comment type="subunit">
    <text evidence="1">Component of the eukaryotic translation initiation factor 3 (eIF-3) complex.</text>
</comment>
<comment type="subcellular location">
    <subcellularLocation>
        <location evidence="1">Cytoplasm</location>
    </subcellularLocation>
</comment>
<comment type="similarity">
    <text evidence="1">Belongs to the eIF-3 subunit E family.</text>
</comment>
<feature type="chain" id="PRO_0000365994" description="Eukaryotic translation initiation factor 3 subunit E">
    <location>
        <begin position="1"/>
        <end position="485"/>
    </location>
</feature>
<feature type="domain" description="PCI" evidence="2">
    <location>
        <begin position="219"/>
        <end position="391"/>
    </location>
</feature>
<feature type="region of interest" description="Disordered" evidence="3">
    <location>
        <begin position="444"/>
        <end position="485"/>
    </location>
</feature>
<feature type="compositionally biased region" description="Basic and acidic residues" evidence="3">
    <location>
        <begin position="451"/>
        <end position="475"/>
    </location>
</feature>
<feature type="compositionally biased region" description="Basic residues" evidence="3">
    <location>
        <begin position="476"/>
        <end position="485"/>
    </location>
</feature>
<reference key="1">
    <citation type="journal article" date="2008" name="Nature">
        <title>The genome of the choanoflagellate Monosiga brevicollis and the origin of metazoans.</title>
        <authorList>
            <consortium name="JGI Sequencing"/>
            <person name="King N."/>
            <person name="Westbrook M.J."/>
            <person name="Young S.L."/>
            <person name="Kuo A."/>
            <person name="Abedin M."/>
            <person name="Chapman J."/>
            <person name="Fairclough S."/>
            <person name="Hellsten U."/>
            <person name="Isogai Y."/>
            <person name="Letunic I."/>
            <person name="Marr M."/>
            <person name="Pincus D."/>
            <person name="Putnam N."/>
            <person name="Rokas A."/>
            <person name="Wright K.J."/>
            <person name="Zuzow R."/>
            <person name="Dirks W."/>
            <person name="Good M."/>
            <person name="Goodstein D."/>
            <person name="Lemons D."/>
            <person name="Li W."/>
            <person name="Lyons J.B."/>
            <person name="Morris A."/>
            <person name="Nichols S."/>
            <person name="Richter D.J."/>
            <person name="Salamov A."/>
            <person name="Bork P."/>
            <person name="Lim W.A."/>
            <person name="Manning G."/>
            <person name="Miller W.T."/>
            <person name="McGinnis W."/>
            <person name="Shapiro H."/>
            <person name="Tjian R."/>
            <person name="Grigoriev I.V."/>
            <person name="Rokhsar D."/>
        </authorList>
    </citation>
    <scope>NUCLEOTIDE SEQUENCE [LARGE SCALE GENOMIC DNA]</scope>
    <source>
        <strain>MX1 / ATCC 50154</strain>
    </source>
</reference>
<gene>
    <name type="ORF">13685</name>
</gene>
<sequence>MAAHDLTQAICQNLDPHLILPLLDHCVDLDIYNEADLKRAKMQVLSRTRLIEQALELADATEKKDLDARMRSISEEEKTWEKQLEPVFEMFENDEVLSIIEATKNKDSLLSELEPYGFTENTADLLYHGSKFYFDRGQYDLAHGLLYNYRAVSTDDKLKFTALWGKLAAAILSGNWQTAQEDMYLLLEYIDGGKNELTAVEQLQQRNWLLHWSLFVFFNQPDGPDGIVDLFMNKETCTNAMQTIAPHLFRYATAVAIMSRRKKRDVMWEFVGIARQDKDLGDDPVVGFLVSLIKDFDFVTAEEKLQQCREVLSKDYFLAEMTDEFINTAQLYLFEVYLRVHSRVSIKNAATRLGKSEDDAEEWLVKLIRDAKLDAQIDPASGEIHITKPVTTVYQHVLDRTKNLQYRTYVIVESLHHLHPNGAFHHSNSSIPALFRRMMNEQLQGGGKSNKKGDYKKGDYKKGGDFKKGGDFKKGGDHKKRAWVK</sequence>
<dbReference type="EMBL" id="CH991543">
    <property type="protein sequence ID" value="EDQ93095.1"/>
    <property type="molecule type" value="Genomic_DNA"/>
</dbReference>
<dbReference type="RefSeq" id="XP_001742857.1">
    <property type="nucleotide sequence ID" value="XM_001742805.1"/>
</dbReference>
<dbReference type="SMR" id="A9UQS1"/>
<dbReference type="FunCoup" id="A9UQS1">
    <property type="interactions" value="1702"/>
</dbReference>
<dbReference type="STRING" id="81824.A9UQS1"/>
<dbReference type="EnsemblProtists" id="EDQ93095">
    <property type="protein sequence ID" value="EDQ93095"/>
    <property type="gene ID" value="MONBRDRAFT_13685"/>
</dbReference>
<dbReference type="KEGG" id="mbr:MONBRDRAFT_13685"/>
<dbReference type="eggNOG" id="KOG2758">
    <property type="taxonomic scope" value="Eukaryota"/>
</dbReference>
<dbReference type="InParanoid" id="A9UQS1"/>
<dbReference type="OMA" id="HERFQIG"/>
<dbReference type="Proteomes" id="UP000001357">
    <property type="component" value="Unassembled WGS sequence"/>
</dbReference>
<dbReference type="GO" id="GO:0016282">
    <property type="term" value="C:eukaryotic 43S preinitiation complex"/>
    <property type="evidence" value="ECO:0007669"/>
    <property type="project" value="UniProtKB-UniRule"/>
</dbReference>
<dbReference type="GO" id="GO:0033290">
    <property type="term" value="C:eukaryotic 48S preinitiation complex"/>
    <property type="evidence" value="ECO:0007669"/>
    <property type="project" value="UniProtKB-UniRule"/>
</dbReference>
<dbReference type="GO" id="GO:0005852">
    <property type="term" value="C:eukaryotic translation initiation factor 3 complex"/>
    <property type="evidence" value="ECO:0000318"/>
    <property type="project" value="GO_Central"/>
</dbReference>
<dbReference type="GO" id="GO:0071540">
    <property type="term" value="C:eukaryotic translation initiation factor 3 complex, eIF3e"/>
    <property type="evidence" value="ECO:0007669"/>
    <property type="project" value="UniProtKB-UniRule"/>
</dbReference>
<dbReference type="GO" id="GO:0005634">
    <property type="term" value="C:nucleus"/>
    <property type="evidence" value="ECO:0000318"/>
    <property type="project" value="GO_Central"/>
</dbReference>
<dbReference type="GO" id="GO:0003743">
    <property type="term" value="F:translation initiation factor activity"/>
    <property type="evidence" value="ECO:0007669"/>
    <property type="project" value="UniProtKB-UniRule"/>
</dbReference>
<dbReference type="GO" id="GO:0001732">
    <property type="term" value="P:formation of cytoplasmic translation initiation complex"/>
    <property type="evidence" value="ECO:0007669"/>
    <property type="project" value="UniProtKB-UniRule"/>
</dbReference>
<dbReference type="GO" id="GO:0006413">
    <property type="term" value="P:translational initiation"/>
    <property type="evidence" value="ECO:0000318"/>
    <property type="project" value="GO_Central"/>
</dbReference>
<dbReference type="CDD" id="cd21378">
    <property type="entry name" value="eIF3E"/>
    <property type="match status" value="1"/>
</dbReference>
<dbReference type="Gene3D" id="1.25.40.570">
    <property type="match status" value="1"/>
</dbReference>
<dbReference type="HAMAP" id="MF_03004">
    <property type="entry name" value="eIF3e"/>
    <property type="match status" value="1"/>
</dbReference>
<dbReference type="InterPro" id="IPR016650">
    <property type="entry name" value="eIF3e"/>
</dbReference>
<dbReference type="InterPro" id="IPR019010">
    <property type="entry name" value="eIF3e_N"/>
</dbReference>
<dbReference type="InterPro" id="IPR000717">
    <property type="entry name" value="PCI_dom"/>
</dbReference>
<dbReference type="InterPro" id="IPR036390">
    <property type="entry name" value="WH_DNA-bd_sf"/>
</dbReference>
<dbReference type="PANTHER" id="PTHR10317">
    <property type="entry name" value="EUKARYOTIC TRANSLATION INITIATION FACTOR 3 SUBUNIT E"/>
    <property type="match status" value="1"/>
</dbReference>
<dbReference type="Pfam" id="PF09440">
    <property type="entry name" value="eIF3_N"/>
    <property type="match status" value="1"/>
</dbReference>
<dbReference type="Pfam" id="PF01399">
    <property type="entry name" value="PCI"/>
    <property type="match status" value="1"/>
</dbReference>
<dbReference type="PIRSF" id="PIRSF016255">
    <property type="entry name" value="eIF3e_su6"/>
    <property type="match status" value="1"/>
</dbReference>
<dbReference type="SMART" id="SM01186">
    <property type="entry name" value="eIF3_N"/>
    <property type="match status" value="1"/>
</dbReference>
<dbReference type="SUPFAM" id="SSF46785">
    <property type="entry name" value="Winged helix' DNA-binding domain"/>
    <property type="match status" value="1"/>
</dbReference>
<dbReference type="PROSITE" id="PS50250">
    <property type="entry name" value="PCI"/>
    <property type="match status" value="1"/>
</dbReference>
<accession>A9UQS1</accession>
<keyword id="KW-0963">Cytoplasm</keyword>
<keyword id="KW-0396">Initiation factor</keyword>
<keyword id="KW-0648">Protein biosynthesis</keyword>
<keyword id="KW-1185">Reference proteome</keyword>
<proteinExistence type="inferred from homology"/>
<name>EIF3E_MONBE</name>